<sequence length="410" mass="46097">MEQEKRQINLPVFLDYQSTTKTDDRVLEAMMPYFKQFSNPHSRSHSFGWKAESAVELARERVASLINAEAKEVIFTSGATESNNLAIKGVANFYKNKGNHIITVRTEHKCVLDSCRYLETEGFHVTYLDVQKNGILDLELLKSSITDKTILVSVMMVNNEIGVIQPIEKIGKICHEHGIFFHTDAAQAFGKISIDVKKMNIDLLSISGHKIYAPMGIGALYIRKRQPRVRLTPMINGGGQERGMRSGTVPTPLAVGLGEAARIAQEVMEEENIRIRELRDILYNEIKKHLPYVVLNGDYEQRIAGNLNLSFPYVEGESIIMAINNLAVSSGSACTSASLEPSYVLRALNIEKDLEHSSIRFGIGRFTTREEILYAAELIVSSIKKLREMSPLWEMVQEGVDLNNIKWDAH</sequence>
<keyword id="KW-0001">2Fe-2S</keyword>
<keyword id="KW-0963">Cytoplasm</keyword>
<keyword id="KW-0408">Iron</keyword>
<keyword id="KW-0411">Iron-sulfur</keyword>
<keyword id="KW-0479">Metal-binding</keyword>
<keyword id="KW-0663">Pyridoxal phosphate</keyword>
<keyword id="KW-1185">Reference proteome</keyword>
<keyword id="KW-0808">Transferase</keyword>
<reference key="1">
    <citation type="journal article" date="2006" name="PLoS Genet.">
        <title>Comparative genomics of emerging human ehrlichiosis agents.</title>
        <authorList>
            <person name="Dunning Hotopp J.C."/>
            <person name="Lin M."/>
            <person name="Madupu R."/>
            <person name="Crabtree J."/>
            <person name="Angiuoli S.V."/>
            <person name="Eisen J.A."/>
            <person name="Seshadri R."/>
            <person name="Ren Q."/>
            <person name="Wu M."/>
            <person name="Utterback T.R."/>
            <person name="Smith S."/>
            <person name="Lewis M."/>
            <person name="Khouri H."/>
            <person name="Zhang C."/>
            <person name="Niu H."/>
            <person name="Lin Q."/>
            <person name="Ohashi N."/>
            <person name="Zhi N."/>
            <person name="Nelson W.C."/>
            <person name="Brinkac L.M."/>
            <person name="Dodson R.J."/>
            <person name="Rosovitz M.J."/>
            <person name="Sundaram J.P."/>
            <person name="Daugherty S.C."/>
            <person name="Davidsen T."/>
            <person name="Durkin A.S."/>
            <person name="Gwinn M.L."/>
            <person name="Haft D.H."/>
            <person name="Selengut J.D."/>
            <person name="Sullivan S.A."/>
            <person name="Zafar N."/>
            <person name="Zhou L."/>
            <person name="Benahmed F."/>
            <person name="Forberger H."/>
            <person name="Halpin R."/>
            <person name="Mulligan S."/>
            <person name="Robinson J."/>
            <person name="White O."/>
            <person name="Rikihisa Y."/>
            <person name="Tettelin H."/>
        </authorList>
    </citation>
    <scope>NUCLEOTIDE SEQUENCE [LARGE SCALE GENOMIC DNA]</scope>
    <source>
        <strain>ATCC CRL-10679 / Arkansas</strain>
    </source>
</reference>
<evidence type="ECO:0000255" key="1">
    <source>
        <dbReference type="HAMAP-Rule" id="MF_00331"/>
    </source>
</evidence>
<proteinExistence type="inferred from homology"/>
<name>ISCS_EHRCR</name>
<feature type="chain" id="PRO_1000019408" description="Cysteine desulfurase IscS">
    <location>
        <begin position="1"/>
        <end position="410"/>
    </location>
</feature>
<feature type="active site" description="Cysteine persulfide intermediate" evidence="1">
    <location>
        <position position="334"/>
    </location>
</feature>
<feature type="binding site" evidence="1">
    <location>
        <begin position="79"/>
        <end position="80"/>
    </location>
    <ligand>
        <name>pyridoxal 5'-phosphate</name>
        <dbReference type="ChEBI" id="CHEBI:597326"/>
    </ligand>
</feature>
<feature type="binding site" evidence="1">
    <location>
        <position position="159"/>
    </location>
    <ligand>
        <name>pyridoxal 5'-phosphate</name>
        <dbReference type="ChEBI" id="CHEBI:597326"/>
    </ligand>
</feature>
<feature type="binding site" evidence="1">
    <location>
        <position position="187"/>
    </location>
    <ligand>
        <name>pyridoxal 5'-phosphate</name>
        <dbReference type="ChEBI" id="CHEBI:597326"/>
    </ligand>
</feature>
<feature type="binding site" evidence="1">
    <location>
        <begin position="207"/>
        <end position="209"/>
    </location>
    <ligand>
        <name>pyridoxal 5'-phosphate</name>
        <dbReference type="ChEBI" id="CHEBI:597326"/>
    </ligand>
</feature>
<feature type="binding site" evidence="1">
    <location>
        <position position="248"/>
    </location>
    <ligand>
        <name>pyridoxal 5'-phosphate</name>
        <dbReference type="ChEBI" id="CHEBI:597326"/>
    </ligand>
</feature>
<feature type="binding site" description="via persulfide group" evidence="1">
    <location>
        <position position="334"/>
    </location>
    <ligand>
        <name>[2Fe-2S] cluster</name>
        <dbReference type="ChEBI" id="CHEBI:190135"/>
        <note>ligand shared with IscU</note>
    </ligand>
</feature>
<feature type="modified residue" description="N6-(pyridoxal phosphate)lysine" evidence="1">
    <location>
        <position position="210"/>
    </location>
</feature>
<protein>
    <recommendedName>
        <fullName evidence="1">Cysteine desulfurase IscS</fullName>
        <ecNumber evidence="1">2.8.1.7</ecNumber>
    </recommendedName>
</protein>
<gene>
    <name evidence="1" type="primary">iscS</name>
    <name type="ordered locus">ECH_0629</name>
</gene>
<dbReference type="EC" id="2.8.1.7" evidence="1"/>
<dbReference type="EMBL" id="CP000236">
    <property type="protein sequence ID" value="ABD45029.1"/>
    <property type="molecule type" value="Genomic_DNA"/>
</dbReference>
<dbReference type="RefSeq" id="WP_006011182.1">
    <property type="nucleotide sequence ID" value="NC_007799.1"/>
</dbReference>
<dbReference type="SMR" id="Q2GGJ4"/>
<dbReference type="STRING" id="205920.ECH_0629"/>
<dbReference type="KEGG" id="ech:ECH_0629"/>
<dbReference type="eggNOG" id="COG1104">
    <property type="taxonomic scope" value="Bacteria"/>
</dbReference>
<dbReference type="HOGENOM" id="CLU_003433_0_2_5"/>
<dbReference type="OrthoDB" id="9808002at2"/>
<dbReference type="UniPathway" id="UPA00266"/>
<dbReference type="Proteomes" id="UP000008320">
    <property type="component" value="Chromosome"/>
</dbReference>
<dbReference type="GO" id="GO:1990221">
    <property type="term" value="C:L-cysteine desulfurase complex"/>
    <property type="evidence" value="ECO:0007669"/>
    <property type="project" value="UniProtKB-ARBA"/>
</dbReference>
<dbReference type="GO" id="GO:0051537">
    <property type="term" value="F:2 iron, 2 sulfur cluster binding"/>
    <property type="evidence" value="ECO:0007669"/>
    <property type="project" value="UniProtKB-UniRule"/>
</dbReference>
<dbReference type="GO" id="GO:0031071">
    <property type="term" value="F:cysteine desulfurase activity"/>
    <property type="evidence" value="ECO:0007669"/>
    <property type="project" value="UniProtKB-UniRule"/>
</dbReference>
<dbReference type="GO" id="GO:0046872">
    <property type="term" value="F:metal ion binding"/>
    <property type="evidence" value="ECO:0007669"/>
    <property type="project" value="UniProtKB-KW"/>
</dbReference>
<dbReference type="GO" id="GO:0030170">
    <property type="term" value="F:pyridoxal phosphate binding"/>
    <property type="evidence" value="ECO:0007669"/>
    <property type="project" value="UniProtKB-UniRule"/>
</dbReference>
<dbReference type="GO" id="GO:0044571">
    <property type="term" value="P:[2Fe-2S] cluster assembly"/>
    <property type="evidence" value="ECO:0007669"/>
    <property type="project" value="UniProtKB-UniRule"/>
</dbReference>
<dbReference type="FunFam" id="3.40.640.10:FF:000003">
    <property type="entry name" value="Cysteine desulfurase IscS"/>
    <property type="match status" value="1"/>
</dbReference>
<dbReference type="FunFam" id="3.90.1150.10:FF:000002">
    <property type="entry name" value="Cysteine desulfurase IscS"/>
    <property type="match status" value="1"/>
</dbReference>
<dbReference type="Gene3D" id="3.90.1150.10">
    <property type="entry name" value="Aspartate Aminotransferase, domain 1"/>
    <property type="match status" value="1"/>
</dbReference>
<dbReference type="Gene3D" id="3.40.640.10">
    <property type="entry name" value="Type I PLP-dependent aspartate aminotransferase-like (Major domain)"/>
    <property type="match status" value="1"/>
</dbReference>
<dbReference type="HAMAP" id="MF_00331">
    <property type="entry name" value="Cys_desulf_IscS"/>
    <property type="match status" value="1"/>
</dbReference>
<dbReference type="InterPro" id="IPR000192">
    <property type="entry name" value="Aminotrans_V_dom"/>
</dbReference>
<dbReference type="InterPro" id="IPR020578">
    <property type="entry name" value="Aminotrans_V_PyrdxlP_BS"/>
</dbReference>
<dbReference type="InterPro" id="IPR010240">
    <property type="entry name" value="Cys_deSase_IscS"/>
</dbReference>
<dbReference type="InterPro" id="IPR016454">
    <property type="entry name" value="Cysteine_dSase"/>
</dbReference>
<dbReference type="InterPro" id="IPR015424">
    <property type="entry name" value="PyrdxlP-dep_Trfase"/>
</dbReference>
<dbReference type="InterPro" id="IPR015421">
    <property type="entry name" value="PyrdxlP-dep_Trfase_major"/>
</dbReference>
<dbReference type="InterPro" id="IPR015422">
    <property type="entry name" value="PyrdxlP-dep_Trfase_small"/>
</dbReference>
<dbReference type="NCBIfam" id="TIGR02006">
    <property type="entry name" value="IscS"/>
    <property type="match status" value="1"/>
</dbReference>
<dbReference type="NCBIfam" id="NF010611">
    <property type="entry name" value="PRK14012.1"/>
    <property type="match status" value="1"/>
</dbReference>
<dbReference type="PANTHER" id="PTHR11601:SF34">
    <property type="entry name" value="CYSTEINE DESULFURASE"/>
    <property type="match status" value="1"/>
</dbReference>
<dbReference type="PANTHER" id="PTHR11601">
    <property type="entry name" value="CYSTEINE DESULFURYLASE FAMILY MEMBER"/>
    <property type="match status" value="1"/>
</dbReference>
<dbReference type="Pfam" id="PF00266">
    <property type="entry name" value="Aminotran_5"/>
    <property type="match status" value="1"/>
</dbReference>
<dbReference type="PIRSF" id="PIRSF005572">
    <property type="entry name" value="NifS"/>
    <property type="match status" value="1"/>
</dbReference>
<dbReference type="SUPFAM" id="SSF53383">
    <property type="entry name" value="PLP-dependent transferases"/>
    <property type="match status" value="1"/>
</dbReference>
<dbReference type="PROSITE" id="PS00595">
    <property type="entry name" value="AA_TRANSFER_CLASS_5"/>
    <property type="match status" value="1"/>
</dbReference>
<comment type="function">
    <text evidence="1">Master enzyme that delivers sulfur to a number of partners involved in Fe-S cluster assembly, tRNA modification or cofactor biosynthesis. Catalyzes the removal of elemental sulfur atoms from cysteine to produce alanine. Functions as a sulfur delivery protein for Fe-S cluster synthesis onto IscU, an Fe-S scaffold assembly protein, as well as other S acceptor proteins.</text>
</comment>
<comment type="catalytic activity">
    <reaction evidence="1">
        <text>(sulfur carrier)-H + L-cysteine = (sulfur carrier)-SH + L-alanine</text>
        <dbReference type="Rhea" id="RHEA:43892"/>
        <dbReference type="Rhea" id="RHEA-COMP:14737"/>
        <dbReference type="Rhea" id="RHEA-COMP:14739"/>
        <dbReference type="ChEBI" id="CHEBI:29917"/>
        <dbReference type="ChEBI" id="CHEBI:35235"/>
        <dbReference type="ChEBI" id="CHEBI:57972"/>
        <dbReference type="ChEBI" id="CHEBI:64428"/>
        <dbReference type="EC" id="2.8.1.7"/>
    </reaction>
</comment>
<comment type="cofactor">
    <cofactor evidence="1">
        <name>pyridoxal 5'-phosphate</name>
        <dbReference type="ChEBI" id="CHEBI:597326"/>
    </cofactor>
</comment>
<comment type="pathway">
    <text evidence="1">Cofactor biosynthesis; iron-sulfur cluster biosynthesis.</text>
</comment>
<comment type="subunit">
    <text evidence="1">Homodimer. Forms a heterotetramer with IscU, interacts with other sulfur acceptors.</text>
</comment>
<comment type="subcellular location">
    <subcellularLocation>
        <location evidence="1">Cytoplasm</location>
    </subcellularLocation>
</comment>
<comment type="similarity">
    <text evidence="1">Belongs to the class-V pyridoxal-phosphate-dependent aminotransferase family. NifS/IscS subfamily.</text>
</comment>
<organism>
    <name type="scientific">Ehrlichia chaffeensis (strain ATCC CRL-10679 / Arkansas)</name>
    <dbReference type="NCBI Taxonomy" id="205920"/>
    <lineage>
        <taxon>Bacteria</taxon>
        <taxon>Pseudomonadati</taxon>
        <taxon>Pseudomonadota</taxon>
        <taxon>Alphaproteobacteria</taxon>
        <taxon>Rickettsiales</taxon>
        <taxon>Anaplasmataceae</taxon>
        <taxon>Ehrlichia</taxon>
    </lineage>
</organism>
<accession>Q2GGJ4</accession>